<feature type="chain" id="PRO_0000274474" description="RAB6A-GEF complex partner protein 2">
    <location>
        <begin position="1"/>
        <end position="394"/>
    </location>
</feature>
<comment type="function">
    <text evidence="2">The RIC1-RGP1 complex acts as a guanine nucleotide exchange factor (GEF), which activates RAB6A by exchanging bound GDP for free GTP and may thereby required for efficient fusion of endosome-derived vesicles with the Golgi compartment. The RIC1-RGP1 complex participates in the recycling of mannose-6-phosphate receptors.</text>
</comment>
<comment type="subunit">
    <text evidence="2">Forms a complex with RIC1; the interaction enhances RAB6A GTPase activity. Interacts with RIC1. Interacts with RAB6A; the interaction is direct with a preference for RAB6A-GDP. Interacts with RAB33B.</text>
</comment>
<comment type="subcellular location">
    <subcellularLocation>
        <location evidence="2">Cytoplasm</location>
        <location evidence="2">Cytosol</location>
    </subcellularLocation>
    <subcellularLocation>
        <location evidence="2">Membrane</location>
    </subcellularLocation>
</comment>
<comment type="similarity">
    <text evidence="3">Belongs to the RGP1 family.</text>
</comment>
<reference key="1">
    <citation type="submission" date="2005-12" db="EMBL/GenBank/DDBJ databases">
        <authorList>
            <consortium name="NIH - Mammalian Gene Collection (MGC) project"/>
        </authorList>
    </citation>
    <scope>NUCLEOTIDE SEQUENCE [LARGE SCALE MRNA]</scope>
    <source>
        <strain>Crossbred X Angus</strain>
        <tissue>Liver</tissue>
    </source>
</reference>
<name>RGP1_BOVIN</name>
<dbReference type="EMBL" id="BC111331">
    <property type="protein sequence ID" value="AAI11332.1"/>
    <property type="molecule type" value="mRNA"/>
</dbReference>
<dbReference type="RefSeq" id="NP_001033273.1">
    <property type="nucleotide sequence ID" value="NM_001038184.1"/>
</dbReference>
<dbReference type="FunCoup" id="Q2T9P3">
    <property type="interactions" value="3190"/>
</dbReference>
<dbReference type="STRING" id="9913.ENSBTAP00000015196"/>
<dbReference type="PaxDb" id="9913-ENSBTAP00000015196"/>
<dbReference type="KEGG" id="bta:539393"/>
<dbReference type="CTD" id="9827"/>
<dbReference type="eggNOG" id="KOG4469">
    <property type="taxonomic scope" value="Eukaryota"/>
</dbReference>
<dbReference type="InParanoid" id="Q2T9P3"/>
<dbReference type="OrthoDB" id="1918at2759"/>
<dbReference type="Proteomes" id="UP000009136">
    <property type="component" value="Unplaced"/>
</dbReference>
<dbReference type="GO" id="GO:0005829">
    <property type="term" value="C:cytosol"/>
    <property type="evidence" value="ECO:0000250"/>
    <property type="project" value="UniProtKB"/>
</dbReference>
<dbReference type="GO" id="GO:0000139">
    <property type="term" value="C:Golgi membrane"/>
    <property type="evidence" value="ECO:0000318"/>
    <property type="project" value="GO_Central"/>
</dbReference>
<dbReference type="GO" id="GO:0016020">
    <property type="term" value="C:membrane"/>
    <property type="evidence" value="ECO:0000250"/>
    <property type="project" value="UniProtKB"/>
</dbReference>
<dbReference type="GO" id="GO:0032991">
    <property type="term" value="C:protein-containing complex"/>
    <property type="evidence" value="ECO:0000250"/>
    <property type="project" value="UniProtKB"/>
</dbReference>
<dbReference type="GO" id="GO:0034066">
    <property type="term" value="C:Ric1-Rgp1 guanyl-nucleotide exchange factor complex"/>
    <property type="evidence" value="ECO:0000250"/>
    <property type="project" value="UniProtKB"/>
</dbReference>
<dbReference type="GO" id="GO:0005085">
    <property type="term" value="F:guanyl-nucleotide exchange factor activity"/>
    <property type="evidence" value="ECO:0000250"/>
    <property type="project" value="UniProtKB"/>
</dbReference>
<dbReference type="GO" id="GO:0031267">
    <property type="term" value="F:small GTPase binding"/>
    <property type="evidence" value="ECO:0000250"/>
    <property type="project" value="UniProtKB"/>
</dbReference>
<dbReference type="GO" id="GO:0042177">
    <property type="term" value="P:negative regulation of protein catabolic process"/>
    <property type="evidence" value="ECO:0000250"/>
    <property type="project" value="UniProtKB"/>
</dbReference>
<dbReference type="GO" id="GO:0043547">
    <property type="term" value="P:positive regulation of GTPase activity"/>
    <property type="evidence" value="ECO:0000250"/>
    <property type="project" value="UniProtKB"/>
</dbReference>
<dbReference type="GO" id="GO:0042147">
    <property type="term" value="P:retrograde transport, endosome to Golgi"/>
    <property type="evidence" value="ECO:0000250"/>
    <property type="project" value="UniProtKB"/>
</dbReference>
<dbReference type="InterPro" id="IPR014848">
    <property type="entry name" value="Rgp1"/>
</dbReference>
<dbReference type="PANTHER" id="PTHR12507">
    <property type="entry name" value="REDUCED GROWTH PHENOTYPE 1 RGP1, YEAST -RELATED"/>
    <property type="match status" value="1"/>
</dbReference>
<dbReference type="Pfam" id="PF08737">
    <property type="entry name" value="Rgp1"/>
    <property type="match status" value="2"/>
</dbReference>
<gene>
    <name evidence="1" type="primary">RGP1</name>
</gene>
<protein>
    <recommendedName>
        <fullName evidence="3">RAB6A-GEF complex partner protein 2</fullName>
    </recommendedName>
    <alternativeName>
        <fullName evidence="1">Retrograde Golgi transport protein RGP1 homolog</fullName>
    </alternativeName>
</protein>
<accession>Q2T9P3</accession>
<proteinExistence type="evidence at transcript level"/>
<evidence type="ECO:0000250" key="1">
    <source>
        <dbReference type="UniProtKB" id="P16664"/>
    </source>
</evidence>
<evidence type="ECO:0000250" key="2">
    <source>
        <dbReference type="UniProtKB" id="Q92546"/>
    </source>
</evidence>
<evidence type="ECO:0000305" key="3"/>
<organism>
    <name type="scientific">Bos taurus</name>
    <name type="common">Bovine</name>
    <dbReference type="NCBI Taxonomy" id="9913"/>
    <lineage>
        <taxon>Eukaryota</taxon>
        <taxon>Metazoa</taxon>
        <taxon>Chordata</taxon>
        <taxon>Craniata</taxon>
        <taxon>Vertebrata</taxon>
        <taxon>Euteleostomi</taxon>
        <taxon>Mammalia</taxon>
        <taxon>Eutheria</taxon>
        <taxon>Laurasiatheria</taxon>
        <taxon>Artiodactyla</taxon>
        <taxon>Ruminantia</taxon>
        <taxon>Pecora</taxon>
        <taxon>Bovidae</taxon>
        <taxon>Bovinae</taxon>
        <taxon>Bos</taxon>
    </lineage>
</organism>
<keyword id="KW-0963">Cytoplasm</keyword>
<keyword id="KW-0344">Guanine-nucleotide releasing factor</keyword>
<keyword id="KW-0472">Membrane</keyword>
<keyword id="KW-1185">Reference proteome</keyword>
<sequence length="394" mass="43098">MIEVVAELSRGPVFLAGEALECVVTVTNPLPPTATSASSEALAWASAQIHCQFHASESRVALPPPDSSQPDVQPESQTVLLPHRGERGQCILSTPPKILFCDLRLDPGESKSYSYSEVLPVEGPPSFRGQSVKYVYKLTIGCQRVNSPITLLRVPLRVLVLTGLQDVRFPQDEAVAPSSPFLEEDEGGKKDSWLTELAGERLMAATSCRSLHLYNISDGRGKVGTFGIFKSVYRLGEDVVGTLNLGEGTVACLQYSVSLQTEERVQPEYQRRRGAGGAPSVSHITHARHQESCLHTTRTSFSLPIPLSSTPGFCTAIVSLKWRLHFEFVTSREPGLVLLPPVEQPEPATWTGPEQVPVDTFSWDLPIKPEASHTFLSVQPASYCYSVRSHIRAI</sequence>